<evidence type="ECO:0000250" key="1"/>
<evidence type="ECO:0000255" key="2"/>
<evidence type="ECO:0000269" key="3">
    <source>
    </source>
</evidence>
<evidence type="ECO:0000269" key="4">
    <source>
    </source>
</evidence>
<evidence type="ECO:0000269" key="5">
    <source>
    </source>
</evidence>
<evidence type="ECO:0000269" key="6">
    <source>
    </source>
</evidence>
<evidence type="ECO:0000305" key="7"/>
<feature type="chain" id="PRO_0000174229" description="Odorant receptor 13a">
    <location>
        <begin position="1"/>
        <end position="418"/>
    </location>
</feature>
<feature type="topological domain" description="Cytoplasmic" evidence="2">
    <location>
        <begin position="1"/>
        <end position="38"/>
    </location>
</feature>
<feature type="transmembrane region" description="Helical; Name=1" evidence="2">
    <location>
        <begin position="39"/>
        <end position="59"/>
    </location>
</feature>
<feature type="topological domain" description="Extracellular" evidence="2">
    <location>
        <begin position="60"/>
        <end position="70"/>
    </location>
</feature>
<feature type="transmembrane region" description="Helical; Name=2" evidence="2">
    <location>
        <begin position="71"/>
        <end position="91"/>
    </location>
</feature>
<feature type="topological domain" description="Cytoplasmic" evidence="2">
    <location>
        <begin position="92"/>
        <end position="140"/>
    </location>
</feature>
<feature type="transmembrane region" description="Helical; Name=3" evidence="2">
    <location>
        <begin position="141"/>
        <end position="161"/>
    </location>
</feature>
<feature type="topological domain" description="Extracellular" evidence="2">
    <location>
        <begin position="162"/>
        <end position="195"/>
    </location>
</feature>
<feature type="transmembrane region" description="Helical; Name=4" evidence="2">
    <location>
        <begin position="196"/>
        <end position="216"/>
    </location>
</feature>
<feature type="topological domain" description="Cytoplasmic" evidence="2">
    <location>
        <begin position="217"/>
        <end position="273"/>
    </location>
</feature>
<feature type="transmembrane region" description="Helical; Name=5" evidence="2">
    <location>
        <begin position="274"/>
        <end position="294"/>
    </location>
</feature>
<feature type="topological domain" description="Extracellular" evidence="2">
    <location>
        <begin position="295"/>
        <end position="299"/>
    </location>
</feature>
<feature type="transmembrane region" description="Helical; Name=6" evidence="2">
    <location>
        <begin position="300"/>
        <end position="320"/>
    </location>
</feature>
<feature type="topological domain" description="Cytoplasmic" evidence="2">
    <location>
        <begin position="321"/>
        <end position="385"/>
    </location>
</feature>
<feature type="transmembrane region" description="Helical; Name=7" evidence="2">
    <location>
        <begin position="386"/>
        <end position="406"/>
    </location>
</feature>
<feature type="topological domain" description="Extracellular" evidence="2">
    <location>
        <begin position="407"/>
        <end position="418"/>
    </location>
</feature>
<feature type="glycosylation site" description="N-linked (GlcNAc...) asparagine" evidence="2">
    <location>
        <position position="69"/>
    </location>
</feature>
<sequence>MFYSYPYKALSFPIQCVWLKLNGSWPLTESSRPWRSQSLLATAYIVWAWYVIASVGITISYQTAFLLNNLSDIIITTENCCTTFMGVLNFVRLIHLRLNQRKFRQLIENFSYEIWIPNSSKNNVAAECRRRMVTFSIMTSLLACLIIMYCVLPLVEIFFGPAFDAQNKPFPYKMIFPYDAQSSWIRYVMTYIFTSYAGICVVTTLFAEDTILGFFITYTCGQFHLLHQRIAGLFAGSNAELAESIQLERLKRIVEKHNNIISFAKRLEDFFNPILLANLMISSVLICMVGFQIVTGKNMFIGDYVKFIIYISSALSQLYVLCENGDALIKQSTLTAQILYECQWEGSDRIEIQSFTPTTKRIRNQIWFMILCSQQPVRITAFKFSTLSLQSFTAILSTSISYFTLLRSVYFDDEKKLD</sequence>
<proteinExistence type="evidence at transcript level"/>
<protein>
    <recommendedName>
        <fullName>Odorant receptor 13a</fullName>
    </recommendedName>
</protein>
<gene>
    <name type="primary">Or13a</name>
    <name type="ORF">CG12697</name>
</gene>
<dbReference type="EMBL" id="AE014298">
    <property type="protein sequence ID" value="AAF48549.2"/>
    <property type="molecule type" value="Genomic_DNA"/>
</dbReference>
<dbReference type="RefSeq" id="NP_523359.2">
    <property type="nucleotide sequence ID" value="NM_078635.3"/>
</dbReference>
<dbReference type="SMR" id="Q9VXL0"/>
<dbReference type="FunCoup" id="Q9VXL0">
    <property type="interactions" value="23"/>
</dbReference>
<dbReference type="STRING" id="7227.FBpp0073938"/>
<dbReference type="GlyCosmos" id="Q9VXL0">
    <property type="glycosylation" value="1 site, No reported glycans"/>
</dbReference>
<dbReference type="GlyGen" id="Q9VXL0">
    <property type="glycosylation" value="1 site"/>
</dbReference>
<dbReference type="PaxDb" id="7227-FBpp0073938"/>
<dbReference type="EnsemblMetazoa" id="FBtr0074133">
    <property type="protein sequence ID" value="FBpp0073938"/>
    <property type="gene ID" value="FBgn0030715"/>
</dbReference>
<dbReference type="GeneID" id="32562"/>
<dbReference type="KEGG" id="dme:Dmel_CG12697"/>
<dbReference type="AGR" id="FB:FBgn0030715"/>
<dbReference type="CTD" id="32562"/>
<dbReference type="FlyBase" id="FBgn0030715">
    <property type="gene designation" value="Or13a"/>
</dbReference>
<dbReference type="VEuPathDB" id="VectorBase:FBgn0030715"/>
<dbReference type="eggNOG" id="ENOG502SAW0">
    <property type="taxonomic scope" value="Eukaryota"/>
</dbReference>
<dbReference type="GeneTree" id="ENSGT00560000077544"/>
<dbReference type="HOGENOM" id="CLU_657682_0_0_1"/>
<dbReference type="InParanoid" id="Q9VXL0"/>
<dbReference type="OMA" id="MILCSQR"/>
<dbReference type="OrthoDB" id="7604726at2759"/>
<dbReference type="PhylomeDB" id="Q9VXL0"/>
<dbReference type="BioGRID-ORCS" id="32562">
    <property type="hits" value="0 hits in 1 CRISPR screen"/>
</dbReference>
<dbReference type="GenomeRNAi" id="32562"/>
<dbReference type="PRO" id="PR:Q9VXL0"/>
<dbReference type="Proteomes" id="UP000000803">
    <property type="component" value="Chromosome X"/>
</dbReference>
<dbReference type="Bgee" id="FBgn0030715">
    <property type="expression patterns" value="Expressed in adult olfactory receptor neuron Or13a (Drosophila) in antenna and 2 other cell types or tissues"/>
</dbReference>
<dbReference type="ExpressionAtlas" id="Q9VXL0">
    <property type="expression patterns" value="baseline and differential"/>
</dbReference>
<dbReference type="GO" id="GO:0034703">
    <property type="term" value="C:cation channel complex"/>
    <property type="evidence" value="ECO:0000250"/>
    <property type="project" value="FlyBase"/>
</dbReference>
<dbReference type="GO" id="GO:0032590">
    <property type="term" value="C:dendrite membrane"/>
    <property type="evidence" value="ECO:0000250"/>
    <property type="project" value="FlyBase"/>
</dbReference>
<dbReference type="GO" id="GO:0005886">
    <property type="term" value="C:plasma membrane"/>
    <property type="evidence" value="ECO:0000250"/>
    <property type="project" value="FlyBase"/>
</dbReference>
<dbReference type="GO" id="GO:0170020">
    <property type="term" value="F:ionotropic olfactory receptor activity"/>
    <property type="evidence" value="ECO:0000250"/>
    <property type="project" value="FlyBase"/>
</dbReference>
<dbReference type="GO" id="GO:0005549">
    <property type="term" value="F:odorant binding"/>
    <property type="evidence" value="ECO:0000250"/>
    <property type="project" value="FlyBase"/>
</dbReference>
<dbReference type="GO" id="GO:0004984">
    <property type="term" value="F:olfactory receptor activity"/>
    <property type="evidence" value="ECO:0000318"/>
    <property type="project" value="GO_Central"/>
</dbReference>
<dbReference type="GO" id="GO:0050911">
    <property type="term" value="P:detection of chemical stimulus involved in sensory perception of smell"/>
    <property type="evidence" value="ECO:0000250"/>
    <property type="project" value="FlyBase"/>
</dbReference>
<dbReference type="GO" id="GO:0007165">
    <property type="term" value="P:signal transduction"/>
    <property type="evidence" value="ECO:0007669"/>
    <property type="project" value="UniProtKB-KW"/>
</dbReference>
<dbReference type="InterPro" id="IPR004117">
    <property type="entry name" value="7tm6_olfct_rcpt"/>
</dbReference>
<dbReference type="PANTHER" id="PTHR21137">
    <property type="entry name" value="ODORANT RECEPTOR"/>
    <property type="match status" value="1"/>
</dbReference>
<dbReference type="PANTHER" id="PTHR21137:SF44">
    <property type="entry name" value="ODORANT RECEPTOR 13A-RELATED"/>
    <property type="match status" value="1"/>
</dbReference>
<dbReference type="Pfam" id="PF02949">
    <property type="entry name" value="7tm_6"/>
    <property type="match status" value="1"/>
</dbReference>
<reference key="1">
    <citation type="journal article" date="2000" name="Science">
        <title>The genome sequence of Drosophila melanogaster.</title>
        <authorList>
            <person name="Adams M.D."/>
            <person name="Celniker S.E."/>
            <person name="Holt R.A."/>
            <person name="Evans C.A."/>
            <person name="Gocayne J.D."/>
            <person name="Amanatides P.G."/>
            <person name="Scherer S.E."/>
            <person name="Li P.W."/>
            <person name="Hoskins R.A."/>
            <person name="Galle R.F."/>
            <person name="George R.A."/>
            <person name="Lewis S.E."/>
            <person name="Richards S."/>
            <person name="Ashburner M."/>
            <person name="Henderson S.N."/>
            <person name="Sutton G.G."/>
            <person name="Wortman J.R."/>
            <person name="Yandell M.D."/>
            <person name="Zhang Q."/>
            <person name="Chen L.X."/>
            <person name="Brandon R.C."/>
            <person name="Rogers Y.-H.C."/>
            <person name="Blazej R.G."/>
            <person name="Champe M."/>
            <person name="Pfeiffer B.D."/>
            <person name="Wan K.H."/>
            <person name="Doyle C."/>
            <person name="Baxter E.G."/>
            <person name="Helt G."/>
            <person name="Nelson C.R."/>
            <person name="Miklos G.L.G."/>
            <person name="Abril J.F."/>
            <person name="Agbayani A."/>
            <person name="An H.-J."/>
            <person name="Andrews-Pfannkoch C."/>
            <person name="Baldwin D."/>
            <person name="Ballew R.M."/>
            <person name="Basu A."/>
            <person name="Baxendale J."/>
            <person name="Bayraktaroglu L."/>
            <person name="Beasley E.M."/>
            <person name="Beeson K.Y."/>
            <person name="Benos P.V."/>
            <person name="Berman B.P."/>
            <person name="Bhandari D."/>
            <person name="Bolshakov S."/>
            <person name="Borkova D."/>
            <person name="Botchan M.R."/>
            <person name="Bouck J."/>
            <person name="Brokstein P."/>
            <person name="Brottier P."/>
            <person name="Burtis K.C."/>
            <person name="Busam D.A."/>
            <person name="Butler H."/>
            <person name="Cadieu E."/>
            <person name="Center A."/>
            <person name="Chandra I."/>
            <person name="Cherry J.M."/>
            <person name="Cawley S."/>
            <person name="Dahlke C."/>
            <person name="Davenport L.B."/>
            <person name="Davies P."/>
            <person name="de Pablos B."/>
            <person name="Delcher A."/>
            <person name="Deng Z."/>
            <person name="Mays A.D."/>
            <person name="Dew I."/>
            <person name="Dietz S.M."/>
            <person name="Dodson K."/>
            <person name="Doup L.E."/>
            <person name="Downes M."/>
            <person name="Dugan-Rocha S."/>
            <person name="Dunkov B.C."/>
            <person name="Dunn P."/>
            <person name="Durbin K.J."/>
            <person name="Evangelista C.C."/>
            <person name="Ferraz C."/>
            <person name="Ferriera S."/>
            <person name="Fleischmann W."/>
            <person name="Fosler C."/>
            <person name="Gabrielian A.E."/>
            <person name="Garg N.S."/>
            <person name="Gelbart W.M."/>
            <person name="Glasser K."/>
            <person name="Glodek A."/>
            <person name="Gong F."/>
            <person name="Gorrell J.H."/>
            <person name="Gu Z."/>
            <person name="Guan P."/>
            <person name="Harris M."/>
            <person name="Harris N.L."/>
            <person name="Harvey D.A."/>
            <person name="Heiman T.J."/>
            <person name="Hernandez J.R."/>
            <person name="Houck J."/>
            <person name="Hostin D."/>
            <person name="Houston K.A."/>
            <person name="Howland T.J."/>
            <person name="Wei M.-H."/>
            <person name="Ibegwam C."/>
            <person name="Jalali M."/>
            <person name="Kalush F."/>
            <person name="Karpen G.H."/>
            <person name="Ke Z."/>
            <person name="Kennison J.A."/>
            <person name="Ketchum K.A."/>
            <person name="Kimmel B.E."/>
            <person name="Kodira C.D."/>
            <person name="Kraft C.L."/>
            <person name="Kravitz S."/>
            <person name="Kulp D."/>
            <person name="Lai Z."/>
            <person name="Lasko P."/>
            <person name="Lei Y."/>
            <person name="Levitsky A.A."/>
            <person name="Li J.H."/>
            <person name="Li Z."/>
            <person name="Liang Y."/>
            <person name="Lin X."/>
            <person name="Liu X."/>
            <person name="Mattei B."/>
            <person name="McIntosh T.C."/>
            <person name="McLeod M.P."/>
            <person name="McPherson D."/>
            <person name="Merkulov G."/>
            <person name="Milshina N.V."/>
            <person name="Mobarry C."/>
            <person name="Morris J."/>
            <person name="Moshrefi A."/>
            <person name="Mount S.M."/>
            <person name="Moy M."/>
            <person name="Murphy B."/>
            <person name="Murphy L."/>
            <person name="Muzny D.M."/>
            <person name="Nelson D.L."/>
            <person name="Nelson D.R."/>
            <person name="Nelson K.A."/>
            <person name="Nixon K."/>
            <person name="Nusskern D.R."/>
            <person name="Pacleb J.M."/>
            <person name="Palazzolo M."/>
            <person name="Pittman G.S."/>
            <person name="Pan S."/>
            <person name="Pollard J."/>
            <person name="Puri V."/>
            <person name="Reese M.G."/>
            <person name="Reinert K."/>
            <person name="Remington K."/>
            <person name="Saunders R.D.C."/>
            <person name="Scheeler F."/>
            <person name="Shen H."/>
            <person name="Shue B.C."/>
            <person name="Siden-Kiamos I."/>
            <person name="Simpson M."/>
            <person name="Skupski M.P."/>
            <person name="Smith T.J."/>
            <person name="Spier E."/>
            <person name="Spradling A.C."/>
            <person name="Stapleton M."/>
            <person name="Strong R."/>
            <person name="Sun E."/>
            <person name="Svirskas R."/>
            <person name="Tector C."/>
            <person name="Turner R."/>
            <person name="Venter E."/>
            <person name="Wang A.H."/>
            <person name="Wang X."/>
            <person name="Wang Z.-Y."/>
            <person name="Wassarman D.A."/>
            <person name="Weinstock G.M."/>
            <person name="Weissenbach J."/>
            <person name="Williams S.M."/>
            <person name="Woodage T."/>
            <person name="Worley K.C."/>
            <person name="Wu D."/>
            <person name="Yang S."/>
            <person name="Yao Q.A."/>
            <person name="Ye J."/>
            <person name="Yeh R.-F."/>
            <person name="Zaveri J.S."/>
            <person name="Zhan M."/>
            <person name="Zhang G."/>
            <person name="Zhao Q."/>
            <person name="Zheng L."/>
            <person name="Zheng X.H."/>
            <person name="Zhong F.N."/>
            <person name="Zhong W."/>
            <person name="Zhou X."/>
            <person name="Zhu S.C."/>
            <person name="Zhu X."/>
            <person name="Smith H.O."/>
            <person name="Gibbs R.A."/>
            <person name="Myers E.W."/>
            <person name="Rubin G.M."/>
            <person name="Venter J.C."/>
        </authorList>
    </citation>
    <scope>NUCLEOTIDE SEQUENCE [LARGE SCALE GENOMIC DNA]</scope>
    <source>
        <strain>Berkeley</strain>
    </source>
</reference>
<reference key="2">
    <citation type="journal article" date="2002" name="Genome Biol.">
        <title>Annotation of the Drosophila melanogaster euchromatic genome: a systematic review.</title>
        <authorList>
            <person name="Misra S."/>
            <person name="Crosby M.A."/>
            <person name="Mungall C.J."/>
            <person name="Matthews B.B."/>
            <person name="Campbell K.S."/>
            <person name="Hradecky P."/>
            <person name="Huang Y."/>
            <person name="Kaminker J.S."/>
            <person name="Millburn G.H."/>
            <person name="Prochnik S.E."/>
            <person name="Smith C.D."/>
            <person name="Tupy J.L."/>
            <person name="Whitfield E.J."/>
            <person name="Bayraktaroglu L."/>
            <person name="Berman B.P."/>
            <person name="Bettencourt B.R."/>
            <person name="Celniker S.E."/>
            <person name="de Grey A.D.N.J."/>
            <person name="Drysdale R.A."/>
            <person name="Harris N.L."/>
            <person name="Richter J."/>
            <person name="Russo S."/>
            <person name="Schroeder A.J."/>
            <person name="Shu S.Q."/>
            <person name="Stapleton M."/>
            <person name="Yamada C."/>
            <person name="Ashburner M."/>
            <person name="Gelbart W.M."/>
            <person name="Rubin G.M."/>
            <person name="Lewis S.E."/>
        </authorList>
    </citation>
    <scope>GENOME REANNOTATION</scope>
    <source>
        <strain>Berkeley</strain>
    </source>
</reference>
<reference key="3">
    <citation type="journal article" date="2000" name="Cell">
        <title>An olfactory sensory map in the fly brain.</title>
        <authorList>
            <person name="Vosshall L.B."/>
            <person name="Wong A.M."/>
            <person name="Axel R."/>
        </authorList>
    </citation>
    <scope>TISSUE SPECIFICITY</scope>
</reference>
<reference key="4">
    <citation type="journal article" date="2010" name="J. Neurosci.">
        <title>Distinct functions of acj6 splice forms in odor receptor gene choice.</title>
        <authorList>
            <person name="Bai L."/>
            <person name="Carlson J.R."/>
        </authorList>
    </citation>
    <scope>FUNCTION</scope>
</reference>
<reference key="5">
    <citation type="journal article" date="2011" name="J. Neurosci.">
        <title>Similar odorants elicit different behavioral and physiological responses, some supersustained.</title>
        <authorList>
            <person name="Montague S.A."/>
            <person name="Mathew D."/>
            <person name="Carlson J.R."/>
        </authorList>
    </citation>
    <scope>FUNCTION</scope>
</reference>
<reference key="6">
    <citation type="journal article" date="2011" name="PLoS ONE">
        <title>Modeling peripheral olfactory coding in Drosophila larvae.</title>
        <authorList>
            <person name="Hoare D.J."/>
            <person name="Humble J."/>
            <person name="Jin D."/>
            <person name="Gilding N."/>
            <person name="Petersen R."/>
            <person name="Cobb M."/>
            <person name="McCrohan C."/>
        </authorList>
    </citation>
    <scope>FUNCTION</scope>
</reference>
<accession>Q9VXL0</accession>
<keyword id="KW-1003">Cell membrane</keyword>
<keyword id="KW-0325">Glycoprotein</keyword>
<keyword id="KW-0472">Membrane</keyword>
<keyword id="KW-0552">Olfaction</keyword>
<keyword id="KW-0675">Receptor</keyword>
<keyword id="KW-1185">Reference proteome</keyword>
<keyword id="KW-0716">Sensory transduction</keyword>
<keyword id="KW-0807">Transducer</keyword>
<keyword id="KW-0812">Transmembrane</keyword>
<keyword id="KW-1133">Transmembrane helix</keyword>
<organism>
    <name type="scientific">Drosophila melanogaster</name>
    <name type="common">Fruit fly</name>
    <dbReference type="NCBI Taxonomy" id="7227"/>
    <lineage>
        <taxon>Eukaryota</taxon>
        <taxon>Metazoa</taxon>
        <taxon>Ecdysozoa</taxon>
        <taxon>Arthropoda</taxon>
        <taxon>Hexapoda</taxon>
        <taxon>Insecta</taxon>
        <taxon>Pterygota</taxon>
        <taxon>Neoptera</taxon>
        <taxon>Endopterygota</taxon>
        <taxon>Diptera</taxon>
        <taxon>Brachycera</taxon>
        <taxon>Muscomorpha</taxon>
        <taxon>Ephydroidea</taxon>
        <taxon>Drosophilidae</taxon>
        <taxon>Drosophila</taxon>
        <taxon>Sophophora</taxon>
    </lineage>
</organism>
<name>OR13A_DROME</name>
<comment type="function">
    <text evidence="4 5 6">Odorant receptor which mediates acceptance or avoidance behavior, depending on its substrates. The odorant receptor repertoire encodes a large collection of odor stimuli that vary widely in identity, intensity, and duration. May form a complex with Orco to form odorant-sensing units, providing sensitive and prolonged odorant signaling and calcium permeability. Involved in the behavioral responses to octanol, nonanol, and pentyl acetate.</text>
</comment>
<comment type="subunit">
    <text evidence="1">Interacts with Orco. Complexes exist early in the endomembrane system in olfactory sensory neurons (OSNs), coupling these complexes to the conserved ciliary trafficking pathway (By similarity).</text>
</comment>
<comment type="subcellular location">
    <subcellularLocation>
        <location evidence="1">Cell membrane</location>
        <topology evidence="1">Multi-pass membrane protein</topology>
    </subcellularLocation>
</comment>
<comment type="tissue specificity">
    <text evidence="3">Expressed in olfactory sensory neurons in the antenna.</text>
</comment>
<comment type="miscellaneous">
    <text>The atypical heteromeric and topological design of the odorant receptors appears to be an insect-specific solution for odor recognition, making the OR/Orco complex an attractive target for the development of highly selective insect repellents to disrupt olfactory-mediated host-seeking behaviors of insect disease vectors. Odor-evoked OR currents are independent of known G-protein-coupled second messenger pathways.</text>
</comment>
<comment type="similarity">
    <text evidence="7">Belongs to the insect chemoreceptor superfamily. Heteromeric odorant receptor channel (TC 1.A.69) family. Or1a subfamily.</text>
</comment>